<keyword id="KW-0027">Amidation</keyword>
<keyword id="KW-0903">Direct protein sequencing</keyword>
<keyword id="KW-0527">Neuropeptide</keyword>
<keyword id="KW-0964">Secreted</keyword>
<name>PVK2_GYNLU</name>
<reference evidence="4" key="1">
    <citation type="journal article" date="2009" name="BMC Evol. Biol.">
        <title>A proteomic approach for studying insect phylogeny: CAPA peptides of ancient insect taxa (Dictyoptera, Blattoptera) as a test case.</title>
        <authorList>
            <person name="Roth S."/>
            <person name="Fromm B."/>
            <person name="Gaede G."/>
            <person name="Predel R."/>
        </authorList>
    </citation>
    <scope>PROTEIN SEQUENCE</scope>
    <scope>AMIDATION AT VAL-11</scope>
    <source>
        <tissue evidence="2">Abdominal perisympathetic organs</tissue>
    </source>
</reference>
<accession>P85648</accession>
<protein>
    <recommendedName>
        <fullName evidence="3">Periviscerokinin-2</fullName>
        <shortName evidence="3">GynLu-PVK-2</shortName>
    </recommendedName>
</protein>
<comment type="function">
    <text evidence="4">Mediates visceral muscle contractile activity (myotropic activity).</text>
</comment>
<comment type="subcellular location">
    <subcellularLocation>
        <location evidence="4">Secreted</location>
    </subcellularLocation>
</comment>
<comment type="similarity">
    <text evidence="1">Belongs to the periviscerokinin family.</text>
</comment>
<feature type="peptide" id="PRO_0000378792" description="Periviscerokinin-2" evidence="2">
    <location>
        <begin position="1"/>
        <end position="11"/>
    </location>
</feature>
<feature type="modified residue" description="Valine amide" evidence="2">
    <location>
        <position position="11"/>
    </location>
</feature>
<evidence type="ECO:0000255" key="1"/>
<evidence type="ECO:0000269" key="2">
    <source>
    </source>
</evidence>
<evidence type="ECO:0000303" key="3">
    <source>
    </source>
</evidence>
<evidence type="ECO:0000305" key="4"/>
<sequence length="11" mass="1103">GSSGLISMPRV</sequence>
<organism>
    <name type="scientific">Gyna lurida</name>
    <name type="common">Porcelain cockroach</name>
    <dbReference type="NCBI Taxonomy" id="406578"/>
    <lineage>
        <taxon>Eukaryota</taxon>
        <taxon>Metazoa</taxon>
        <taxon>Ecdysozoa</taxon>
        <taxon>Arthropoda</taxon>
        <taxon>Hexapoda</taxon>
        <taxon>Insecta</taxon>
        <taxon>Pterygota</taxon>
        <taxon>Neoptera</taxon>
        <taxon>Polyneoptera</taxon>
        <taxon>Dictyoptera</taxon>
        <taxon>Blattodea</taxon>
        <taxon>Blaberoidea</taxon>
        <taxon>Blaberidae</taxon>
        <taxon>Gyninae</taxon>
        <taxon>Gyna</taxon>
    </lineage>
</organism>
<dbReference type="GO" id="GO:0005576">
    <property type="term" value="C:extracellular region"/>
    <property type="evidence" value="ECO:0007669"/>
    <property type="project" value="UniProtKB-SubCell"/>
</dbReference>
<dbReference type="GO" id="GO:0007218">
    <property type="term" value="P:neuropeptide signaling pathway"/>
    <property type="evidence" value="ECO:0007669"/>
    <property type="project" value="UniProtKB-KW"/>
</dbReference>
<dbReference type="InterPro" id="IPR013231">
    <property type="entry name" value="Periviscerokinin"/>
</dbReference>
<dbReference type="Pfam" id="PF08259">
    <property type="entry name" value="Periviscerokin"/>
    <property type="match status" value="1"/>
</dbReference>
<proteinExistence type="evidence at protein level"/>